<name>MK_RAT</name>
<proteinExistence type="evidence at transcript level"/>
<comment type="function">
    <text evidence="1 4 5">Developmentally regulated, secreted growth factor homologous to pleiotrophin (PTN), which has heparin binding activity. Binds anaplastic lymphoma kinase (ALK) which induces ALK activation and subsequent phosphorylation of the insulin receptor substrate (IRS1), followed by the activation of mitogen-activated protein kinase (MAPK) and PI3-kinase, and the induction of cell proliferation. Involved in neointima formation after arterial injury, possibly by mediating leukocyte recruitment. Also involved in early fetal adrenal gland development (By similarity).</text>
</comment>
<comment type="function">
    <text evidence="2 3 4 5">Secreted protein that functions as a cytokine and growth factor and mediates its signal through cell-surface proteoglycan and non-proteoglycan receptors. Binds cell-surface proteoglycan receptors via their chondroitin sulfate (CS) groups. Thereby regulates many processes like inflammatory response, cell proliferation, cell adhesion, cell growth, cell survival, tissue regeneration, cell differentiation and cell migration. Participates in inflammatory processes by exerting two different activities (By similarity). Firstly, mediates neutrophils and macrophages recruitment to the sites of inflammation both by direct action by cooperating namely with ITGB2 via LRP1 and by inducing chemokine expression (PubMed:10683378). This inflammation can be accompanied by epithelial cell survival and smooth muscle cell migration after renal and vessel damage, respectively. Secondly, suppresses the development of tolerogenic dendric cells thereby inhibiting the differentiation of regulatory T cells and also promote T cell expansion through NFAT signaling and Th1 cell differentiation (By similarity). Promotes tissue regeneration after injury or trauma. After heart damage negatively regulates the recruitment of inflammatory cells and mediates cell survival through activation of anti-apoptotic signaling pathways via MAPKs and AKT pathways through the activation of angiogenesis. Also facilitates liver regeneration as well as bone repair by recruiting macrophage at trauma site and by promoting cartilage development by facilitating chondrocyte differentiation. Plays a role in brain by promoting neural precursor cells survival and growth through interaction with heparan sulfate proteoglycans (By similarity). Binds PTPRZ1 and promotes neuronal migration and embryonic neurons survival. Binds SDC3 or GPC2 and mediates neurite outgrowth and cell adhesion. Binds chondroitin sulfate E and heparin leading to inhibition of neuronal cell adhesion induced by binding with GPC2 (By similarity). Binds CSPG5 and promotes elongation of oligodendroglial precursor-like cells (By similarity). Also binds ITGA6:ITGB1 complex; this interaction mediates MDK-induced neurite outgrowth. Binds LRP1; promotes neuronal survival. Binds ITGA4:ITGB1 complex; this interaction mediates MDK-induced osteoblast cells migration through PXN phosphorylation. Binds anaplastic lymphoma kinase (ALK) which induces ALK activation and subsequent phosphorylation of the insulin receptor substrate (IRS1), followed by the activation of mitogen-activated protein kinase (MAPK) and PI3-kinase, and the induction of cell proliferation. Promotes epithelial to mesenchymal transition through interaction with NOTCH2 (By similarity). During arteriogenesis, plays a role in vascular endothelial cell proliferation by inducing VEGFA expression and release which in turn induces nitric oxide synthase expression. Moreover activates vasodilation through nitric oxide synthase activation. Negatively regulates bone formation in response to mechanical load by inhibiting Wnt/beta-catenin signaling in osteoblasts (By similarity). In addition plays a role in hippocampal development, working memory, auditory response, early fetal adrenal gland development and the female reproductive system (By similarity) (PubMed:11136554).</text>
</comment>
<comment type="subunit">
    <text evidence="2 3">Homodimer. Interacts with ALK. Interacts with LRP1; promotes neuronal survival. Interacts with LRP2. Interacts with NCAM1. Interacts (via C-terminal) with PTPRZ1 (via chondroitin sulfate chains); this interaction is inhibited by PTN; this interaction promotes neuronal migration. Interacts with NCL; this interaction promotes NCL clustering and lateral movements of this complex into lipid rafts leading to MDK internalization. Interacts with LRP6 and LRP8: this interaction is calcium dependent. Interacts with ITGA4. Interacts with ITGA6. Interacts with ITGB1. Interacts with ITGA4:ITGB1 complex; this interaction mediates MDK-induced osteoblast cells migration through PXN phosphorylation. Interacts with ITGA6:ITGB1 complex; this interaction mediates MDK-induced neurite outgrowth. Interacts with NOTCH2; this interactio mediates a nuclear accumulation of NOTCH2 and therefore activation of NOTCH2 signaling leading to interaction between HES1 and STAT3. Interacts with GPC2 (via heparan sulfate chain); this interaction is inhibited by heparin followed by chondroitin sulfate E; this interaction induces GPC2 clustering through heparan sulfate chain; this interaction induces neuronal cell adhesion and neurite outgrowth. Interacts with SDC3; this interaction induces SDC3 clustering; this interaction induces neuronal cell adhesion and neurite outgrowth (By similarity). Interacts with SDC1 (By similarity). Interacts with CSPG5; this interaction promotes elongation of oligodendroglial precursor-like cells (By similarity).</text>
</comment>
<comment type="subcellular location">
    <subcellularLocation>
        <location evidence="9">Secreted</location>
    </subcellularLocation>
</comment>
<comment type="tissue specificity">
    <text evidence="4 6">Expressed at a low level in arteries, and at higher levels in newly formed neointima. In brain, expressed in the caudate nucleus and the brain stem.</text>
</comment>
<comment type="developmental stage">
    <text evidence="5 6">In the cortices of the adrenal glands, expressed at 12.5 dpc, decreases considerably at 15.5 dpc and is almost undetectable in the newborn stage. In brain, expressed at low levels in early embryos, expression peaks between 12 dpc and 14 dpc, and rapidly falls until birth when expression is barely detectable.</text>
</comment>
<comment type="induction">
    <text evidence="4">In arteries 3 days after injury. Expression continues to increase until day 7 after injury and decreases slightly by day 14.</text>
</comment>
<comment type="similarity">
    <text evidence="9">Belongs to the pleiotrophin family.</text>
</comment>
<organism>
    <name type="scientific">Rattus norvegicus</name>
    <name type="common">Rat</name>
    <dbReference type="NCBI Taxonomy" id="10116"/>
    <lineage>
        <taxon>Eukaryota</taxon>
        <taxon>Metazoa</taxon>
        <taxon>Chordata</taxon>
        <taxon>Craniata</taxon>
        <taxon>Vertebrata</taxon>
        <taxon>Euteleostomi</taxon>
        <taxon>Mammalia</taxon>
        <taxon>Eutheria</taxon>
        <taxon>Euarchontoglires</taxon>
        <taxon>Glires</taxon>
        <taxon>Rodentia</taxon>
        <taxon>Myomorpha</taxon>
        <taxon>Muroidea</taxon>
        <taxon>Muridae</taxon>
        <taxon>Murinae</taxon>
        <taxon>Rattus</taxon>
    </lineage>
</organism>
<gene>
    <name evidence="10" type="primary">Mdk</name>
</gene>
<reference key="1">
    <citation type="journal article" date="2000" name="J. Clin. Invest.">
        <title>Neointima formation in a restenosis model is suppressed in midkine-deficient mice.</title>
        <authorList>
            <person name="Horiba M."/>
            <person name="Kadomatsu K."/>
            <person name="Nakamura E."/>
            <person name="Muramatsu H."/>
            <person name="Ikematsu S."/>
            <person name="Sakuma S."/>
            <person name="Hayashi K."/>
            <person name="Yuzawa Y."/>
            <person name="Matsuo S."/>
            <person name="Kuzuya M."/>
            <person name="Kaname T."/>
            <person name="Hirai M."/>
            <person name="Saito H."/>
            <person name="Muramatsu T."/>
        </authorList>
    </citation>
    <scope>NUCLEOTIDE SEQUENCE [MRNA]</scope>
    <scope>FUNCTION</scope>
    <scope>TISSUE SPECIFICITY</scope>
    <scope>INDUCTION</scope>
    <source>
        <strain>Sprague-Dawley</strain>
        <tissue>Kidney</tissue>
    </source>
</reference>
<reference key="2">
    <citation type="journal article" date="2000" name="Mol. Genet. Metab.">
        <title>Midkine is expressed early in rat fetal adrenal development.</title>
        <authorList>
            <person name="Dewing P."/>
            <person name="Ching S.T."/>
            <person name="Zhang Y.-H."/>
            <person name="Huang B.-L."/>
            <person name="Peirce R.M."/>
            <person name="McCabe E.R.B."/>
            <person name="Vilain E."/>
        </authorList>
    </citation>
    <scope>NUCLEOTIDE SEQUENCE [MRNA]</scope>
    <scope>FUNCTION</scope>
    <scope>DEVELOPMENTAL STAGE</scope>
    <source>
        <strain>Sprague-Dawley</strain>
        <tissue>Fetal adrenal gland</tissue>
    </source>
</reference>
<reference key="3">
    <citation type="journal article" date="1991" name="Growth Factors">
        <title>Cloning, characterization and developmental regulation of two members of a novel human gene family of neurite outgrowth-promoting proteins.</title>
        <authorList>
            <person name="Kretschmer P.J."/>
            <person name="Fairhurst J.L."/>
            <person name="Decker M.M."/>
            <person name="Chan C.P."/>
            <person name="Gluzman Y."/>
            <person name="Boehlen P."/>
            <person name="Kovesdi I."/>
        </authorList>
    </citation>
    <scope>TISSUE SPECIFICITY</scope>
    <scope>DEVELOPMENTAL STAGE</scope>
</reference>
<keyword id="KW-0217">Developmental protein</keyword>
<keyword id="KW-0221">Differentiation</keyword>
<keyword id="KW-1015">Disulfide bond</keyword>
<keyword id="KW-0339">Growth factor</keyword>
<keyword id="KW-0358">Heparin-binding</keyword>
<keyword id="KW-0497">Mitogen</keyword>
<keyword id="KW-1185">Reference proteome</keyword>
<keyword id="KW-0964">Secreted</keyword>
<keyword id="KW-0732">Signal</keyword>
<evidence type="ECO:0000250" key="1"/>
<evidence type="ECO:0000250" key="2">
    <source>
        <dbReference type="UniProtKB" id="P12025"/>
    </source>
</evidence>
<evidence type="ECO:0000250" key="3">
    <source>
        <dbReference type="UniProtKB" id="P21741"/>
    </source>
</evidence>
<evidence type="ECO:0000269" key="4">
    <source>
    </source>
</evidence>
<evidence type="ECO:0000269" key="5">
    <source>
    </source>
</evidence>
<evidence type="ECO:0000269" key="6">
    <source>
    </source>
</evidence>
<evidence type="ECO:0000303" key="7">
    <source>
    </source>
</evidence>
<evidence type="ECO:0000303" key="8">
    <source>
    </source>
</evidence>
<evidence type="ECO:0000305" key="9"/>
<evidence type="ECO:0000312" key="10">
    <source>
        <dbReference type="RGD" id="69073"/>
    </source>
</evidence>
<sequence>MQHRSFFLLALVALLAVTTAVAKKKDKVKKGSECSEWTWGPCTPSSKDCGMGFREGTCGAQTQRIHCKVPCNWKKEFGADCKYKFESWGACDGSTGTKARQGTLKKARYNAQCQETIRVTKPCTSKTKSKAKAKKGKGKD</sequence>
<protein>
    <recommendedName>
        <fullName evidence="7 8">Midkine</fullName>
        <shortName evidence="7">MK</shortName>
    </recommendedName>
</protein>
<accession>Q9R1S9</accession>
<dbReference type="EMBL" id="AB025023">
    <property type="protein sequence ID" value="BAA83783.1"/>
    <property type="molecule type" value="mRNA"/>
</dbReference>
<dbReference type="EMBL" id="AF315950">
    <property type="protein sequence ID" value="AAG45151.1"/>
    <property type="molecule type" value="mRNA"/>
</dbReference>
<dbReference type="RefSeq" id="NP_001400143.1">
    <property type="nucleotide sequence ID" value="NM_001413214.1"/>
</dbReference>
<dbReference type="RefSeq" id="NP_110486.1">
    <property type="nucleotide sequence ID" value="NM_030859.3"/>
</dbReference>
<dbReference type="RefSeq" id="XP_006234654.1">
    <property type="nucleotide sequence ID" value="XM_006234592.2"/>
</dbReference>
<dbReference type="RefSeq" id="XP_006234655.1">
    <property type="nucleotide sequence ID" value="XM_006234593.5"/>
</dbReference>
<dbReference type="SMR" id="Q9R1S9"/>
<dbReference type="BioGRID" id="249514">
    <property type="interactions" value="4"/>
</dbReference>
<dbReference type="FunCoup" id="Q9R1S9">
    <property type="interactions" value="463"/>
</dbReference>
<dbReference type="IntAct" id="Q9R1S9">
    <property type="interactions" value="1"/>
</dbReference>
<dbReference type="STRING" id="10116.ENSRNOP00000036207"/>
<dbReference type="PhosphoSitePlus" id="Q9R1S9"/>
<dbReference type="PaxDb" id="10116-ENSRNOP00000036207"/>
<dbReference type="GeneID" id="81517"/>
<dbReference type="KEGG" id="rno:81517"/>
<dbReference type="UCSC" id="RGD:69073">
    <property type="organism name" value="rat"/>
</dbReference>
<dbReference type="AGR" id="RGD:69073"/>
<dbReference type="CTD" id="4192"/>
<dbReference type="RGD" id="69073">
    <property type="gene designation" value="Mdk"/>
</dbReference>
<dbReference type="VEuPathDB" id="HostDB:ENSRNOG00000017560"/>
<dbReference type="eggNOG" id="ENOG502S022">
    <property type="taxonomic scope" value="Eukaryota"/>
</dbReference>
<dbReference type="HOGENOM" id="CLU_136864_0_0_1"/>
<dbReference type="InParanoid" id="Q9R1S9"/>
<dbReference type="OrthoDB" id="73400at9989"/>
<dbReference type="PhylomeDB" id="Q9R1S9"/>
<dbReference type="Reactome" id="R-RNO-201556">
    <property type="pathway name" value="Signaling by ALK"/>
</dbReference>
<dbReference type="Reactome" id="R-RNO-9851151">
    <property type="pathway name" value="MDK and PTN in ALK signaling"/>
</dbReference>
<dbReference type="PRO" id="PR:Q9R1S9"/>
<dbReference type="Proteomes" id="UP000002494">
    <property type="component" value="Chromosome 3"/>
</dbReference>
<dbReference type="Bgee" id="ENSRNOG00000017560">
    <property type="expression patterns" value="Expressed in ovary and 19 other cell types or tissues"/>
</dbReference>
<dbReference type="ExpressionAtlas" id="Q9R1S9">
    <property type="expression patterns" value="baseline and differential"/>
</dbReference>
<dbReference type="GO" id="GO:0042995">
    <property type="term" value="C:cell projection"/>
    <property type="evidence" value="ECO:0000314"/>
    <property type="project" value="RGD"/>
</dbReference>
<dbReference type="GO" id="GO:0005576">
    <property type="term" value="C:extracellular region"/>
    <property type="evidence" value="ECO:0007669"/>
    <property type="project" value="UniProtKB-SubCell"/>
</dbReference>
<dbReference type="GO" id="GO:0035374">
    <property type="term" value="F:chondroitin sulfate binding"/>
    <property type="evidence" value="ECO:0000250"/>
    <property type="project" value="UniProtKB"/>
</dbReference>
<dbReference type="GO" id="GO:0008083">
    <property type="term" value="F:growth factor activity"/>
    <property type="evidence" value="ECO:0000318"/>
    <property type="project" value="GO_Central"/>
</dbReference>
<dbReference type="GO" id="GO:1904399">
    <property type="term" value="F:heparan sulfate binding"/>
    <property type="evidence" value="ECO:0000250"/>
    <property type="project" value="UniProtKB"/>
</dbReference>
<dbReference type="GO" id="GO:0008201">
    <property type="term" value="F:heparin binding"/>
    <property type="evidence" value="ECO:0000250"/>
    <property type="project" value="UniProtKB"/>
</dbReference>
<dbReference type="GO" id="GO:0030325">
    <property type="term" value="P:adrenal gland development"/>
    <property type="evidence" value="ECO:0000314"/>
    <property type="project" value="UniProtKB"/>
</dbReference>
<dbReference type="GO" id="GO:0001662">
    <property type="term" value="P:behavioral fear response"/>
    <property type="evidence" value="ECO:0000266"/>
    <property type="project" value="RGD"/>
</dbReference>
<dbReference type="GO" id="GO:0016477">
    <property type="term" value="P:cell migration"/>
    <property type="evidence" value="ECO:0000314"/>
    <property type="project" value="RGD"/>
</dbReference>
<dbReference type="GO" id="GO:0021681">
    <property type="term" value="P:cerebellar granular layer development"/>
    <property type="evidence" value="ECO:0000266"/>
    <property type="project" value="RGD"/>
</dbReference>
<dbReference type="GO" id="GO:0021987">
    <property type="term" value="P:cerebral cortex development"/>
    <property type="evidence" value="ECO:0000266"/>
    <property type="project" value="RGD"/>
</dbReference>
<dbReference type="GO" id="GO:0007010">
    <property type="term" value="P:cytoskeleton organization"/>
    <property type="evidence" value="ECO:0000250"/>
    <property type="project" value="UniProtKB"/>
</dbReference>
<dbReference type="GO" id="GO:0030421">
    <property type="term" value="P:defecation"/>
    <property type="evidence" value="ECO:0000266"/>
    <property type="project" value="RGD"/>
</dbReference>
<dbReference type="GO" id="GO:0021542">
    <property type="term" value="P:dentate gyrus development"/>
    <property type="evidence" value="ECO:0000266"/>
    <property type="project" value="RGD"/>
</dbReference>
<dbReference type="GO" id="GO:0044849">
    <property type="term" value="P:estrous cycle"/>
    <property type="evidence" value="ECO:0000250"/>
    <property type="project" value="UniProtKB"/>
</dbReference>
<dbReference type="GO" id="GO:0106091">
    <property type="term" value="P:glial cell projection elongation"/>
    <property type="evidence" value="ECO:0000250"/>
    <property type="project" value="UniProtKB"/>
</dbReference>
<dbReference type="GO" id="GO:0021766">
    <property type="term" value="P:hippocampus development"/>
    <property type="evidence" value="ECO:0000266"/>
    <property type="project" value="RGD"/>
</dbReference>
<dbReference type="GO" id="GO:0035556">
    <property type="term" value="P:intracellular signal transduction"/>
    <property type="evidence" value="ECO:0000250"/>
    <property type="project" value="UniProtKB"/>
</dbReference>
<dbReference type="GO" id="GO:0002232">
    <property type="term" value="P:leukocyte chemotaxis involved in inflammatory response"/>
    <property type="evidence" value="ECO:0000250"/>
    <property type="project" value="UniProtKB"/>
</dbReference>
<dbReference type="GO" id="GO:0090090">
    <property type="term" value="P:negative regulation of canonical Wnt signaling pathway"/>
    <property type="evidence" value="ECO:0000250"/>
    <property type="project" value="UniProtKB"/>
</dbReference>
<dbReference type="GO" id="GO:0010667">
    <property type="term" value="P:negative regulation of cardiac muscle cell apoptotic process"/>
    <property type="evidence" value="ECO:0000250"/>
    <property type="project" value="UniProtKB"/>
</dbReference>
<dbReference type="GO" id="GO:0007162">
    <property type="term" value="P:negative regulation of cell adhesion"/>
    <property type="evidence" value="ECO:0000250"/>
    <property type="project" value="UniProtKB"/>
</dbReference>
<dbReference type="GO" id="GO:1904036">
    <property type="term" value="P:negative regulation of epithelial cell apoptotic process"/>
    <property type="evidence" value="ECO:0000250"/>
    <property type="project" value="UniProtKB"/>
</dbReference>
<dbReference type="GO" id="GO:0106015">
    <property type="term" value="P:negative regulation of inflammatory response to wounding"/>
    <property type="evidence" value="ECO:0000250"/>
    <property type="project" value="UniProtKB"/>
</dbReference>
<dbReference type="GO" id="GO:0043524">
    <property type="term" value="P:negative regulation of neuron apoptotic process"/>
    <property type="evidence" value="ECO:0000250"/>
    <property type="project" value="UniProtKB"/>
</dbReference>
<dbReference type="GO" id="GO:0030279">
    <property type="term" value="P:negative regulation of ossification"/>
    <property type="evidence" value="ECO:0000250"/>
    <property type="project" value="UniProtKB"/>
</dbReference>
<dbReference type="GO" id="GO:0045590">
    <property type="term" value="P:negative regulation of regulatory T cell differentiation"/>
    <property type="evidence" value="ECO:0000250"/>
    <property type="project" value="UniProtKB"/>
</dbReference>
<dbReference type="GO" id="GO:0048477">
    <property type="term" value="P:oogenesis"/>
    <property type="evidence" value="ECO:0000250"/>
    <property type="project" value="UniProtKB"/>
</dbReference>
<dbReference type="GO" id="GO:1905653">
    <property type="term" value="P:positive regulation of artery morphogenesis"/>
    <property type="evidence" value="ECO:0000250"/>
    <property type="project" value="UniProtKB"/>
</dbReference>
<dbReference type="GO" id="GO:1905555">
    <property type="term" value="P:positive regulation of blood vessel branching"/>
    <property type="evidence" value="ECO:0000250"/>
    <property type="project" value="UniProtKB"/>
</dbReference>
<dbReference type="GO" id="GO:0061036">
    <property type="term" value="P:positive regulation of cartilage development"/>
    <property type="evidence" value="ECO:0000250"/>
    <property type="project" value="UniProtKB"/>
</dbReference>
<dbReference type="GO" id="GO:0045785">
    <property type="term" value="P:positive regulation of cell adhesion"/>
    <property type="evidence" value="ECO:0000250"/>
    <property type="project" value="UniProtKB"/>
</dbReference>
<dbReference type="GO" id="GO:0051781">
    <property type="term" value="P:positive regulation of cell division"/>
    <property type="evidence" value="ECO:0007669"/>
    <property type="project" value="UniProtKB-KW"/>
</dbReference>
<dbReference type="GO" id="GO:0030335">
    <property type="term" value="P:positive regulation of cell migration"/>
    <property type="evidence" value="ECO:0000250"/>
    <property type="project" value="UniProtKB"/>
</dbReference>
<dbReference type="GO" id="GO:0045893">
    <property type="term" value="P:positive regulation of DNA-templated transcription"/>
    <property type="evidence" value="ECO:0000266"/>
    <property type="project" value="RGD"/>
</dbReference>
<dbReference type="GO" id="GO:0010718">
    <property type="term" value="P:positive regulation of epithelial to mesenchymal transition"/>
    <property type="evidence" value="ECO:0000250"/>
    <property type="project" value="UniProtKB"/>
</dbReference>
<dbReference type="GO" id="GO:2000347">
    <property type="term" value="P:positive regulation of hepatocyte proliferation"/>
    <property type="evidence" value="ECO:0000250"/>
    <property type="project" value="UniProtKB"/>
</dbReference>
<dbReference type="GO" id="GO:0050729">
    <property type="term" value="P:positive regulation of inflammatory response"/>
    <property type="evidence" value="ECO:0000250"/>
    <property type="project" value="UniProtKB"/>
</dbReference>
<dbReference type="GO" id="GO:0106016">
    <property type="term" value="P:positive regulation of inflammatory response to wounding"/>
    <property type="evidence" value="ECO:0000250"/>
    <property type="project" value="UniProtKB"/>
</dbReference>
<dbReference type="GO" id="GO:0032735">
    <property type="term" value="P:positive regulation of interleukin-12 production"/>
    <property type="evidence" value="ECO:0000250"/>
    <property type="project" value="UniProtKB"/>
</dbReference>
<dbReference type="GO" id="GO:0010838">
    <property type="term" value="P:positive regulation of keratinocyte proliferation"/>
    <property type="evidence" value="ECO:0000250"/>
    <property type="project" value="UniProtKB"/>
</dbReference>
<dbReference type="GO" id="GO:1904996">
    <property type="term" value="P:positive regulation of leukocyte adhesion to vascular endothelial cell"/>
    <property type="evidence" value="ECO:0000250"/>
    <property type="project" value="UniProtKB"/>
</dbReference>
<dbReference type="GO" id="GO:1903039">
    <property type="term" value="P:positive regulation of leukocyte cell-cell adhesion"/>
    <property type="evidence" value="ECO:0000250"/>
    <property type="project" value="UniProtKB"/>
</dbReference>
<dbReference type="GO" id="GO:0002690">
    <property type="term" value="P:positive regulation of leukocyte chemotaxis"/>
    <property type="evidence" value="ECO:0000250"/>
    <property type="project" value="UniProtKB"/>
</dbReference>
<dbReference type="GO" id="GO:0010759">
    <property type="term" value="P:positive regulation of macrophage chemotaxis"/>
    <property type="evidence" value="ECO:0000250"/>
    <property type="project" value="UniProtKB"/>
</dbReference>
<dbReference type="GO" id="GO:2000179">
    <property type="term" value="P:positive regulation of neural precursor cell proliferation"/>
    <property type="evidence" value="ECO:0000250"/>
    <property type="project" value="UniProtKB"/>
</dbReference>
<dbReference type="GO" id="GO:2001224">
    <property type="term" value="P:positive regulation of neuron migration"/>
    <property type="evidence" value="ECO:0000250"/>
    <property type="project" value="UniProtKB"/>
</dbReference>
<dbReference type="GO" id="GO:0010976">
    <property type="term" value="P:positive regulation of neuron projection development"/>
    <property type="evidence" value="ECO:0000250"/>
    <property type="project" value="UniProtKB"/>
</dbReference>
<dbReference type="GO" id="GO:0090023">
    <property type="term" value="P:positive regulation of neutrophil chemotaxis"/>
    <property type="evidence" value="ECO:0000250"/>
    <property type="project" value="UniProtKB"/>
</dbReference>
<dbReference type="GO" id="GO:2000391">
    <property type="term" value="P:positive regulation of neutrophil extravasation"/>
    <property type="evidence" value="ECO:0000250"/>
    <property type="project" value="UniProtKB"/>
</dbReference>
<dbReference type="GO" id="GO:0048714">
    <property type="term" value="P:positive regulation of oligodendrocyte differentiation"/>
    <property type="evidence" value="ECO:0000250"/>
    <property type="project" value="UniProtKB"/>
</dbReference>
<dbReference type="GO" id="GO:0071673">
    <property type="term" value="P:positive regulation of smooth muscle cell chemotaxis"/>
    <property type="evidence" value="ECO:0000250"/>
    <property type="project" value="UniProtKB"/>
</dbReference>
<dbReference type="GO" id="GO:1900026">
    <property type="term" value="P:positive regulation of substrate adhesion-dependent cell spreading"/>
    <property type="evidence" value="ECO:0000250"/>
    <property type="project" value="UniProtKB"/>
</dbReference>
<dbReference type="GO" id="GO:0045582">
    <property type="term" value="P:positive regulation of T cell differentiation"/>
    <property type="evidence" value="ECO:0000250"/>
    <property type="project" value="UniProtKB"/>
</dbReference>
<dbReference type="GO" id="GO:1905564">
    <property type="term" value="P:positive regulation of vascular endothelial cell proliferation"/>
    <property type="evidence" value="ECO:0000250"/>
    <property type="project" value="UniProtKB"/>
</dbReference>
<dbReference type="GO" id="GO:0050795">
    <property type="term" value="P:regulation of behavior"/>
    <property type="evidence" value="ECO:0000266"/>
    <property type="project" value="RGD"/>
</dbReference>
<dbReference type="GO" id="GO:0046850">
    <property type="term" value="P:regulation of bone remodeling"/>
    <property type="evidence" value="ECO:0000250"/>
    <property type="project" value="UniProtKB"/>
</dbReference>
<dbReference type="GO" id="GO:0032330">
    <property type="term" value="P:regulation of chondrocyte differentiation"/>
    <property type="evidence" value="ECO:0000250"/>
    <property type="project" value="UniProtKB"/>
</dbReference>
<dbReference type="GO" id="GO:0010996">
    <property type="term" value="P:response to auditory stimulus"/>
    <property type="evidence" value="ECO:0000250"/>
    <property type="project" value="UniProtKB"/>
</dbReference>
<dbReference type="GO" id="GO:0051384">
    <property type="term" value="P:response to glucocorticoid"/>
    <property type="evidence" value="ECO:0000270"/>
    <property type="project" value="RGD"/>
</dbReference>
<dbReference type="GO" id="GO:0009725">
    <property type="term" value="P:response to hormone"/>
    <property type="evidence" value="ECO:0000270"/>
    <property type="project" value="RGD"/>
</dbReference>
<dbReference type="GO" id="GO:0009611">
    <property type="term" value="P:response to wounding"/>
    <property type="evidence" value="ECO:0000314"/>
    <property type="project" value="UniProtKB"/>
</dbReference>
<dbReference type="GO" id="GO:0009410">
    <property type="term" value="P:response to xenobiotic stimulus"/>
    <property type="evidence" value="ECO:0000270"/>
    <property type="project" value="RGD"/>
</dbReference>
<dbReference type="GO" id="GO:0007614">
    <property type="term" value="P:short-term memory"/>
    <property type="evidence" value="ECO:0000266"/>
    <property type="project" value="RGD"/>
</dbReference>
<dbReference type="GO" id="GO:0002286">
    <property type="term" value="P:T cell activation involved in immune response"/>
    <property type="evidence" value="ECO:0000250"/>
    <property type="project" value="UniProtKB"/>
</dbReference>
<dbReference type="GO" id="GO:0042246">
    <property type="term" value="P:tissue regeneration"/>
    <property type="evidence" value="ECO:0000250"/>
    <property type="project" value="UniProtKB"/>
</dbReference>
<dbReference type="FunFam" id="2.20.60.10:FF:000002">
    <property type="entry name" value="Midkine a"/>
    <property type="match status" value="1"/>
</dbReference>
<dbReference type="FunFam" id="2.30.90.10:FF:000001">
    <property type="entry name" value="Pleiotrophin"/>
    <property type="match status" value="1"/>
</dbReference>
<dbReference type="Gene3D" id="2.30.90.10">
    <property type="entry name" value="Heparin-binding Growth Factor, Midkine, Chain A- C-terminal Domain"/>
    <property type="match status" value="1"/>
</dbReference>
<dbReference type="Gene3D" id="2.20.60.10">
    <property type="entry name" value="Pleiotrophin/Midkine, N-terminal domain"/>
    <property type="match status" value="1"/>
</dbReference>
<dbReference type="InterPro" id="IPR000762">
    <property type="entry name" value="Midkine_heparin-bd_GF"/>
</dbReference>
<dbReference type="InterPro" id="IPR020090">
    <property type="entry name" value="PTN/MK_C_dom"/>
</dbReference>
<dbReference type="InterPro" id="IPR038130">
    <property type="entry name" value="PTN/MK_C_dom_sf"/>
</dbReference>
<dbReference type="InterPro" id="IPR020091">
    <property type="entry name" value="PTN/MK_diS_sf"/>
</dbReference>
<dbReference type="InterPro" id="IPR020089">
    <property type="entry name" value="PTN/MK_N_dom"/>
</dbReference>
<dbReference type="InterPro" id="IPR037122">
    <property type="entry name" value="PTN/MK_N_dom_sf"/>
</dbReference>
<dbReference type="InterPro" id="IPR020092">
    <property type="entry name" value="PTN_MK_heparin-bd_GF_CS"/>
</dbReference>
<dbReference type="PANTHER" id="PTHR13850:SF2">
    <property type="entry name" value="MIDKINE"/>
    <property type="match status" value="1"/>
</dbReference>
<dbReference type="PANTHER" id="PTHR13850">
    <property type="entry name" value="PLEIOTROPHIN FAMILY MEMBER"/>
    <property type="match status" value="1"/>
</dbReference>
<dbReference type="Pfam" id="PF01091">
    <property type="entry name" value="PTN_MK_C"/>
    <property type="match status" value="1"/>
</dbReference>
<dbReference type="Pfam" id="PF05196">
    <property type="entry name" value="PTN_MK_N"/>
    <property type="match status" value="1"/>
</dbReference>
<dbReference type="PRINTS" id="PR00269">
    <property type="entry name" value="PTNMIDKINE"/>
</dbReference>
<dbReference type="SMART" id="SM00193">
    <property type="entry name" value="PTN"/>
    <property type="match status" value="1"/>
</dbReference>
<dbReference type="SUPFAM" id="SSF57288">
    <property type="entry name" value="Midkine"/>
    <property type="match status" value="2"/>
</dbReference>
<dbReference type="PROSITE" id="PS00619">
    <property type="entry name" value="PTN_MK_1"/>
    <property type="match status" value="1"/>
</dbReference>
<dbReference type="PROSITE" id="PS00620">
    <property type="entry name" value="PTN_MK_2"/>
    <property type="match status" value="1"/>
</dbReference>
<feature type="signal peptide" evidence="1">
    <location>
        <begin position="1"/>
        <end position="20"/>
    </location>
</feature>
<feature type="chain" id="PRO_0000024664" description="Midkine">
    <location>
        <begin position="21"/>
        <end position="140"/>
    </location>
</feature>
<feature type="site" description="Required for high affinity binding to PTRZ1 by interacting with the chondroitin sulfate chains of PTRZ1" evidence="2">
    <location>
        <position position="100"/>
    </location>
</feature>
<feature type="disulfide bond" evidence="1">
    <location>
        <begin position="34"/>
        <end position="58"/>
    </location>
</feature>
<feature type="disulfide bond" evidence="1">
    <location>
        <begin position="42"/>
        <end position="67"/>
    </location>
</feature>
<feature type="disulfide bond" evidence="1">
    <location>
        <begin position="49"/>
        <end position="71"/>
    </location>
</feature>
<feature type="disulfide bond" evidence="1">
    <location>
        <begin position="81"/>
        <end position="113"/>
    </location>
</feature>
<feature type="disulfide bond" evidence="1">
    <location>
        <begin position="91"/>
        <end position="123"/>
    </location>
</feature>